<protein>
    <recommendedName>
        <fullName evidence="1">H2HPP isomerase</fullName>
        <ecNumber evidence="1">5.3.3.19</ecNumber>
    </recommendedName>
    <alternativeName>
        <fullName evidence="1">3-((4R)-4-hydroxycyclohexa-1,5-dien-1-yl)-2-oxopropanoate isomerase</fullName>
    </alternativeName>
    <alternativeName>
        <fullName evidence="1">Bacilysin biosynthesis protein BacB</fullName>
    </alternativeName>
    <alternativeName>
        <fullName evidence="1">Bi-cupin protein</fullName>
    </alternativeName>
</protein>
<comment type="function">
    <text evidence="1">Part of the bacABCDEF operon responsible for the biosynthesis of the nonribosomally synthesized dipeptide antibiotic bacilysin, composed of L-alanine and L-anticapsin. Bacilysin is an irreversible inactivator of the glutaminase domain of glucosamine synthetase. BacB catalyzes the allylic isomerization of the endocyclic-delta(4),delta(8)-7R-dihydro-hydroxyphenylpyruvate (en-H2HPP) to generate a mixture of 3E,7R- and 3Z, 7R-olefins of the exocyclic-delta(3),delta(5)-dihydro-hydroxyphenylpyruvate (ex-H2HPP).</text>
</comment>
<comment type="catalytic activity">
    <reaction evidence="1">
        <text>3-[(4R)-4-hydroxycyclohexa-1,5-dien-1-yl]-2-oxopropanoate = 3-[(1E,4R)-4-hydroxycyclohex-2-en-1-ylidene]pyruvate</text>
        <dbReference type="Rhea" id="RHEA:33819"/>
        <dbReference type="ChEBI" id="CHEBI:84354"/>
        <dbReference type="ChEBI" id="CHEBI:84355"/>
        <dbReference type="EC" id="5.3.3.19"/>
    </reaction>
</comment>
<comment type="cofactor">
    <cofactor evidence="1">
        <name>Fe(2+)</name>
        <dbReference type="ChEBI" id="CHEBI:29033"/>
    </cofactor>
    <cofactor evidence="1">
        <name>Co(2+)</name>
        <dbReference type="ChEBI" id="CHEBI:48828"/>
    </cofactor>
    <text evidence="1">Binds 2 Fe(2+) or Co(2+) ions per subunit.</text>
</comment>
<comment type="pathway">
    <text evidence="1">Antibiotic biosynthesis; bacilysin biosynthesis.</text>
</comment>
<comment type="subunit">
    <text evidence="1">Monomer.</text>
</comment>
<comment type="subcellular location">
    <subcellularLocation>
        <location evidence="3">Cytoplasm</location>
    </subcellularLocation>
</comment>
<sequence length="236" mass="26732">MKTEQDLQELYFPTPKLIEWDNGVRQYSSVRGDTEVLLSYVPPHTNVEPHQHKEVQIGLVVSGELSMTVGDVTRKMTALESAYIAPPNVPHGARNETDQEVIAIDIKRLKAGETYTSPEDYFLNIFKTRDLLPGMEVTFFVEDWVEIMLANIPGNGGEMPFHKHRNEQIGICIGGGYDMTIEGCKVDMTFGTAYFCDPREDHGAINRFEKDSKSVNIFFPPRYNRAKAKKLEAKES</sequence>
<evidence type="ECO:0000250" key="1">
    <source>
        <dbReference type="UniProtKB" id="P39639"/>
    </source>
</evidence>
<evidence type="ECO:0000255" key="2"/>
<evidence type="ECO:0000305" key="3"/>
<dbReference type="EC" id="5.3.3.19" evidence="1"/>
<dbReference type="EMBL" id="AF396778">
    <property type="protein sequence ID" value="AAM90569.1"/>
    <property type="molecule type" value="Genomic_DNA"/>
</dbReference>
<dbReference type="SMR" id="Q8KWT5"/>
<dbReference type="STRING" id="483913.AN935_19110"/>
<dbReference type="PATRIC" id="fig|1423.171.peg.2216"/>
<dbReference type="UniPathway" id="UPA00100"/>
<dbReference type="GO" id="GO:0005737">
    <property type="term" value="C:cytoplasm"/>
    <property type="evidence" value="ECO:0007669"/>
    <property type="project" value="UniProtKB-SubCell"/>
</dbReference>
<dbReference type="GO" id="GO:0050897">
    <property type="term" value="F:cobalt ion binding"/>
    <property type="evidence" value="ECO:0000250"/>
    <property type="project" value="UniProtKB"/>
</dbReference>
<dbReference type="GO" id="GO:0016863">
    <property type="term" value="F:intramolecular oxidoreductase activity, transposing C=C bonds"/>
    <property type="evidence" value="ECO:0000250"/>
    <property type="project" value="UniProtKB"/>
</dbReference>
<dbReference type="GO" id="GO:0005506">
    <property type="term" value="F:iron ion binding"/>
    <property type="evidence" value="ECO:0000250"/>
    <property type="project" value="UniProtKB"/>
</dbReference>
<dbReference type="GO" id="GO:0017000">
    <property type="term" value="P:antibiotic biosynthetic process"/>
    <property type="evidence" value="ECO:0000250"/>
    <property type="project" value="UniProtKB"/>
</dbReference>
<dbReference type="CDD" id="cd10547">
    <property type="entry name" value="cupin_BacB_C"/>
    <property type="match status" value="1"/>
</dbReference>
<dbReference type="CDD" id="cd20307">
    <property type="entry name" value="cupin_BacB_N"/>
    <property type="match status" value="1"/>
</dbReference>
<dbReference type="Gene3D" id="2.60.120.10">
    <property type="entry name" value="Jelly Rolls"/>
    <property type="match status" value="2"/>
</dbReference>
<dbReference type="InterPro" id="IPR052535">
    <property type="entry name" value="Bacilysin_H2HPP_isomerase"/>
</dbReference>
<dbReference type="InterPro" id="IPR013096">
    <property type="entry name" value="Cupin_2"/>
</dbReference>
<dbReference type="InterPro" id="IPR014710">
    <property type="entry name" value="RmlC-like_jellyroll"/>
</dbReference>
<dbReference type="InterPro" id="IPR011051">
    <property type="entry name" value="RmlC_Cupin_sf"/>
</dbReference>
<dbReference type="PANTHER" id="PTHR40112">
    <property type="entry name" value="H2HPP ISOMERASE"/>
    <property type="match status" value="1"/>
</dbReference>
<dbReference type="PANTHER" id="PTHR40112:SF1">
    <property type="entry name" value="H2HPP ISOMERASE"/>
    <property type="match status" value="1"/>
</dbReference>
<dbReference type="Pfam" id="PF07883">
    <property type="entry name" value="Cupin_2"/>
    <property type="match status" value="2"/>
</dbReference>
<dbReference type="SUPFAM" id="SSF51182">
    <property type="entry name" value="RmlC-like cupins"/>
    <property type="match status" value="1"/>
</dbReference>
<feature type="chain" id="PRO_0000064799" description="H2HPP isomerase">
    <location>
        <begin position="1"/>
        <end position="236"/>
    </location>
</feature>
<feature type="domain" description="Cupin type-1 1" evidence="2">
    <location>
        <begin position="40"/>
        <end position="106"/>
    </location>
</feature>
<feature type="domain" description="Cupin type-1 2" evidence="2">
    <location>
        <begin position="151"/>
        <end position="215"/>
    </location>
</feature>
<feature type="binding site" evidence="1">
    <location>
        <position position="50"/>
    </location>
    <ligand>
        <name>a divalent metal cation</name>
        <dbReference type="ChEBI" id="CHEBI:60240"/>
        <label>1</label>
    </ligand>
</feature>
<feature type="binding site" evidence="1">
    <location>
        <position position="52"/>
    </location>
    <ligand>
        <name>a divalent metal cation</name>
        <dbReference type="ChEBI" id="CHEBI:60240"/>
        <label>1</label>
    </ligand>
</feature>
<feature type="binding site" evidence="1">
    <location>
        <position position="56"/>
    </location>
    <ligand>
        <name>a divalent metal cation</name>
        <dbReference type="ChEBI" id="CHEBI:60240"/>
        <label>1</label>
    </ligand>
</feature>
<feature type="binding site" evidence="1">
    <location>
        <position position="91"/>
    </location>
    <ligand>
        <name>a divalent metal cation</name>
        <dbReference type="ChEBI" id="CHEBI:60240"/>
        <label>1</label>
    </ligand>
</feature>
<feature type="binding site" evidence="1">
    <location>
        <position position="162"/>
    </location>
    <ligand>
        <name>a divalent metal cation</name>
        <dbReference type="ChEBI" id="CHEBI:60240"/>
        <label>2</label>
    </ligand>
</feature>
<feature type="binding site" evidence="1">
    <location>
        <position position="164"/>
    </location>
    <ligand>
        <name>a divalent metal cation</name>
        <dbReference type="ChEBI" id="CHEBI:60240"/>
        <label>2</label>
    </ligand>
</feature>
<feature type="binding site" evidence="1">
    <location>
        <position position="168"/>
    </location>
    <ligand>
        <name>a divalent metal cation</name>
        <dbReference type="ChEBI" id="CHEBI:60240"/>
        <label>2</label>
    </ligand>
</feature>
<feature type="binding site" evidence="1">
    <location>
        <position position="202"/>
    </location>
    <ligand>
        <name>a divalent metal cation</name>
        <dbReference type="ChEBI" id="CHEBI:60240"/>
        <label>2</label>
    </ligand>
</feature>
<feature type="binding site" evidence="1">
    <location>
        <position position="223"/>
    </location>
    <ligand>
        <name>substrate</name>
    </ligand>
</feature>
<proteinExistence type="inferred from homology"/>
<gene>
    <name evidence="1" type="primary">bacB</name>
</gene>
<accession>Q8KWT5</accession>
<organism>
    <name type="scientific">Bacillus subtilis</name>
    <dbReference type="NCBI Taxonomy" id="1423"/>
    <lineage>
        <taxon>Bacteria</taxon>
        <taxon>Bacillati</taxon>
        <taxon>Bacillota</taxon>
        <taxon>Bacilli</taxon>
        <taxon>Bacillales</taxon>
        <taxon>Bacillaceae</taxon>
        <taxon>Bacillus</taxon>
    </lineage>
</organism>
<keyword id="KW-0045">Antibiotic biosynthesis</keyword>
<keyword id="KW-0170">Cobalt</keyword>
<keyword id="KW-0963">Cytoplasm</keyword>
<keyword id="KW-0408">Iron</keyword>
<keyword id="KW-0413">Isomerase</keyword>
<keyword id="KW-0479">Metal-binding</keyword>
<name>BACB_BACIU</name>
<reference key="1">
    <citation type="journal article" date="2005" name="Arch. Microbiol.">
        <title>bac genes for recombinant bacilysin and anticapsin production in Bacillus host strains.</title>
        <authorList>
            <person name="Steinborn G."/>
            <person name="Hajirezaei M.-R."/>
            <person name="Hofemeister J."/>
        </authorList>
    </citation>
    <scope>NUCLEOTIDE SEQUENCE [GENOMIC DNA]</scope>
    <source>
        <strain>A1/3</strain>
    </source>
</reference>